<protein>
    <recommendedName>
        <fullName evidence="1">Cobalt transport protein CbiN</fullName>
    </recommendedName>
    <alternativeName>
        <fullName evidence="1">Energy-coupling factor transporter probable substrate-capture protein CbiN</fullName>
        <shortName evidence="1">ECF transporter S component CbiN</shortName>
    </alternativeName>
</protein>
<comment type="function">
    <text evidence="1">Part of the energy-coupling factor (ECF) transporter complex CbiMNOQ involved in cobalt import.</text>
</comment>
<comment type="pathway">
    <text evidence="1">Cofactor biosynthesis; adenosylcobalamin biosynthesis.</text>
</comment>
<comment type="subunit">
    <text evidence="1">Forms an energy-coupling factor (ECF) transporter complex composed of an ATP-binding protein (A component, CbiO), a transmembrane protein (T component, CbiQ) and 2 possible substrate-capture proteins (S components, CbiM and CbiN) of unknown stoichimetry.</text>
</comment>
<comment type="subcellular location">
    <subcellularLocation>
        <location evidence="1">Cell membrane</location>
        <topology evidence="1">Multi-pass membrane protein</topology>
    </subcellularLocation>
</comment>
<comment type="similarity">
    <text evidence="1">Belongs to the CbiN family.</text>
</comment>
<comment type="sequence caution" evidence="2">
    <conflict type="frameshift">
        <sequence resource="EMBL-CDS" id="AAB84637"/>
    </conflict>
</comment>
<dbReference type="EMBL" id="AE000666">
    <property type="protein sequence ID" value="AAB84637.1"/>
    <property type="status" value="ALT_FRAME"/>
    <property type="molecule type" value="Genomic_DNA"/>
</dbReference>
<dbReference type="PIR" id="A69041">
    <property type="entry name" value="A69041"/>
</dbReference>
<dbReference type="STRING" id="187420.MTH_131"/>
<dbReference type="PaxDb" id="187420-MTH_131"/>
<dbReference type="EnsemblBacteria" id="AAB84637">
    <property type="protein sequence ID" value="AAB84637"/>
    <property type="gene ID" value="MTH_131"/>
</dbReference>
<dbReference type="KEGG" id="mth:MTH_131"/>
<dbReference type="PATRIC" id="fig|187420.15.peg.104"/>
<dbReference type="HOGENOM" id="CLU_136197_2_1_2"/>
<dbReference type="InParanoid" id="O26234"/>
<dbReference type="UniPathway" id="UPA00148"/>
<dbReference type="Proteomes" id="UP000005223">
    <property type="component" value="Chromosome"/>
</dbReference>
<dbReference type="GO" id="GO:0005886">
    <property type="term" value="C:plasma membrane"/>
    <property type="evidence" value="ECO:0007669"/>
    <property type="project" value="UniProtKB-SubCell"/>
</dbReference>
<dbReference type="GO" id="GO:0015087">
    <property type="term" value="F:cobalt ion transmembrane transporter activity"/>
    <property type="evidence" value="ECO:0007669"/>
    <property type="project" value="UniProtKB-UniRule"/>
</dbReference>
<dbReference type="GO" id="GO:0009236">
    <property type="term" value="P:cobalamin biosynthetic process"/>
    <property type="evidence" value="ECO:0007669"/>
    <property type="project" value="UniProtKB-UniRule"/>
</dbReference>
<dbReference type="HAMAP" id="MF_00330">
    <property type="entry name" value="CbiN"/>
    <property type="match status" value="1"/>
</dbReference>
<dbReference type="InterPro" id="IPR003705">
    <property type="entry name" value="CbiN"/>
</dbReference>
<dbReference type="NCBIfam" id="TIGR01165">
    <property type="entry name" value="cbiN"/>
    <property type="match status" value="1"/>
</dbReference>
<dbReference type="NCBIfam" id="NF002780">
    <property type="entry name" value="PRK02898.1"/>
    <property type="match status" value="1"/>
</dbReference>
<dbReference type="PANTHER" id="PTHR38662">
    <property type="entry name" value="COBALT TRANSPORT PROTEIN CBIN"/>
    <property type="match status" value="1"/>
</dbReference>
<dbReference type="PANTHER" id="PTHR38662:SF1">
    <property type="entry name" value="COBALT TRANSPORT PROTEIN CBIN"/>
    <property type="match status" value="1"/>
</dbReference>
<dbReference type="Pfam" id="PF02553">
    <property type="entry name" value="CbiN"/>
    <property type="match status" value="1"/>
</dbReference>
<evidence type="ECO:0000255" key="1">
    <source>
        <dbReference type="HAMAP-Rule" id="MF_00330"/>
    </source>
</evidence>
<evidence type="ECO:0000305" key="2"/>
<keyword id="KW-1003">Cell membrane</keyword>
<keyword id="KW-0169">Cobalamin biosynthesis</keyword>
<keyword id="KW-0170">Cobalt</keyword>
<keyword id="KW-0171">Cobalt transport</keyword>
<keyword id="KW-0406">Ion transport</keyword>
<keyword id="KW-0472">Membrane</keyword>
<keyword id="KW-1185">Reference proteome</keyword>
<keyword id="KW-0812">Transmembrane</keyword>
<keyword id="KW-1133">Transmembrane helix</keyword>
<keyword id="KW-0813">Transport</keyword>
<name>CBIN_METTH</name>
<feature type="chain" id="PRO_0000134703" description="Cobalt transport protein CbiN">
    <location>
        <begin position="1"/>
        <end position="95"/>
    </location>
</feature>
<feature type="transmembrane region" description="Helical" evidence="1">
    <location>
        <begin position="5"/>
        <end position="25"/>
    </location>
</feature>
<feature type="transmembrane region" description="Helical" evidence="1">
    <location>
        <begin position="67"/>
        <end position="87"/>
    </location>
</feature>
<organism>
    <name type="scientific">Methanothermobacter thermautotrophicus (strain ATCC 29096 / DSM 1053 / JCM 10044 / NBRC 100330 / Delta H)</name>
    <name type="common">Methanobacterium thermoautotrophicum</name>
    <dbReference type="NCBI Taxonomy" id="187420"/>
    <lineage>
        <taxon>Archaea</taxon>
        <taxon>Methanobacteriati</taxon>
        <taxon>Methanobacteriota</taxon>
        <taxon>Methanomada group</taxon>
        <taxon>Methanobacteria</taxon>
        <taxon>Methanobacteriales</taxon>
        <taxon>Methanobacteriaceae</taxon>
        <taxon>Methanothermobacter</taxon>
    </lineage>
</organism>
<reference key="1">
    <citation type="journal article" date="1997" name="J. Bacteriol.">
        <title>Complete genome sequence of Methanobacterium thermoautotrophicum deltaH: functional analysis and comparative genomics.</title>
        <authorList>
            <person name="Smith D.R."/>
            <person name="Doucette-Stamm L.A."/>
            <person name="Deloughery C."/>
            <person name="Lee H.-M."/>
            <person name="Dubois J."/>
            <person name="Aldredge T."/>
            <person name="Bashirzadeh R."/>
            <person name="Blakely D."/>
            <person name="Cook R."/>
            <person name="Gilbert K."/>
            <person name="Harrison D."/>
            <person name="Hoang L."/>
            <person name="Keagle P."/>
            <person name="Lumm W."/>
            <person name="Pothier B."/>
            <person name="Qiu D."/>
            <person name="Spadafora R."/>
            <person name="Vicare R."/>
            <person name="Wang Y."/>
            <person name="Wierzbowski J."/>
            <person name="Gibson R."/>
            <person name="Jiwani N."/>
            <person name="Caruso A."/>
            <person name="Bush D."/>
            <person name="Safer H."/>
            <person name="Patwell D."/>
            <person name="Prabhakar S."/>
            <person name="McDougall S."/>
            <person name="Shimer G."/>
            <person name="Goyal A."/>
            <person name="Pietrovski S."/>
            <person name="Church G.M."/>
            <person name="Daniels C.J."/>
            <person name="Mao J.-I."/>
            <person name="Rice P."/>
            <person name="Noelling J."/>
            <person name="Reeve J.N."/>
        </authorList>
    </citation>
    <scope>NUCLEOTIDE SEQUENCE [LARGE SCALE GENOMIC DNA]</scope>
    <source>
        <strain>ATCC 29096 / DSM 1053 / JCM 10044 / NBRC 100330 / Delta H</strain>
    </source>
</reference>
<proteinExistence type="inferred from homology"/>
<sequence length="95" mass="10310">MDKRHILMLLAVIIISVAPLIIYSGHGEDDGYFGGADDSAGDAITETGYKPWFQPLWEPPSGEIESLLFALQAAIGALIIGYVFGYYRGRGESSE</sequence>
<accession>O26234</accession>
<gene>
    <name evidence="1" type="primary">cbiN</name>
    <name type="ordered locus">MTH_131</name>
</gene>